<sequence>MTKISVGLQLVTRDSREKLNNIVIKSSLRLNRSNPNISELCFLKTCHLCNKQLHQDKDVYMYRGDLGFCSRECRESQMLIDDRKELEASTKMMLASYRRCNNGAGKSESRNLFDDLRRRRQLFIVP</sequence>
<gene>
    <name evidence="6" type="primary">FLZ17</name>
    <name evidence="5" type="synonym">DUF581-3</name>
    <name evidence="8" type="ordered locus">At1g53885</name>
    <name evidence="9" type="ORF">T18A20</name>
</gene>
<keyword id="KW-0963">Cytoplasm</keyword>
<keyword id="KW-0479">Metal-binding</keyword>
<keyword id="KW-0539">Nucleus</keyword>
<keyword id="KW-1185">Reference proteome</keyword>
<keyword id="KW-0862">Zinc</keyword>
<keyword id="KW-0863">Zinc-finger</keyword>
<accession>P0DO11</accession>
<accession>Q8GWT6</accession>
<evidence type="ECO:0000255" key="1">
    <source>
        <dbReference type="PROSITE-ProRule" id="PRU01131"/>
    </source>
</evidence>
<evidence type="ECO:0000269" key="2">
    <source>
    </source>
</evidence>
<evidence type="ECO:0000269" key="3">
    <source>
    </source>
</evidence>
<evidence type="ECO:0000269" key="4">
    <source>
    </source>
</evidence>
<evidence type="ECO:0000303" key="5">
    <source>
    </source>
</evidence>
<evidence type="ECO:0000303" key="6">
    <source>
    </source>
</evidence>
<evidence type="ECO:0000305" key="7"/>
<evidence type="ECO:0000312" key="8">
    <source>
        <dbReference type="Araport" id="AT1G53885"/>
    </source>
</evidence>
<evidence type="ECO:0000312" key="9">
    <source>
        <dbReference type="EMBL" id="AC009324"/>
    </source>
</evidence>
<feature type="chain" id="PRO_0000445507" description="FCS-Like Zinc finger 17">
    <location>
        <begin position="1"/>
        <end position="126"/>
    </location>
</feature>
<feature type="zinc finger region" description="FLZ-type" evidence="1">
    <location>
        <begin position="41"/>
        <end position="85"/>
    </location>
</feature>
<organism>
    <name type="scientific">Arabidopsis thaliana</name>
    <name type="common">Mouse-ear cress</name>
    <dbReference type="NCBI Taxonomy" id="3702"/>
    <lineage>
        <taxon>Eukaryota</taxon>
        <taxon>Viridiplantae</taxon>
        <taxon>Streptophyta</taxon>
        <taxon>Embryophyta</taxon>
        <taxon>Tracheophyta</taxon>
        <taxon>Spermatophyta</taxon>
        <taxon>Magnoliopsida</taxon>
        <taxon>eudicotyledons</taxon>
        <taxon>Gunneridae</taxon>
        <taxon>Pentapetalae</taxon>
        <taxon>rosids</taxon>
        <taxon>malvids</taxon>
        <taxon>Brassicales</taxon>
        <taxon>Brassicaceae</taxon>
        <taxon>Camelineae</taxon>
        <taxon>Arabidopsis</taxon>
    </lineage>
</organism>
<name>FLZ17_ARATH</name>
<dbReference type="EMBL" id="AC009324">
    <property type="status" value="NOT_ANNOTATED_CDS"/>
    <property type="molecule type" value="Genomic_DNA"/>
</dbReference>
<dbReference type="EMBL" id="CP002684">
    <property type="protein sequence ID" value="AEE33015.1"/>
    <property type="molecule type" value="Genomic_DNA"/>
</dbReference>
<dbReference type="EMBL" id="AK118646">
    <property type="protein sequence ID" value="BAC43242.1"/>
    <property type="molecule type" value="mRNA"/>
</dbReference>
<dbReference type="EMBL" id="BT004725">
    <property type="protein sequence ID" value="AAO42971.1"/>
    <property type="molecule type" value="mRNA"/>
</dbReference>
<dbReference type="RefSeq" id="NP_001117487.1">
    <property type="nucleotide sequence ID" value="NM_001124015.2"/>
</dbReference>
<dbReference type="RefSeq" id="NP_564644.1">
    <property type="nucleotide sequence ID" value="NM_104266.3"/>
</dbReference>
<dbReference type="SMR" id="P0DO11"/>
<dbReference type="STRING" id="3702.P0DO11"/>
<dbReference type="iPTMnet" id="P0DO11"/>
<dbReference type="PaxDb" id="3702-AT1G53885.1"/>
<dbReference type="EnsemblPlants" id="AT1G53885.1">
    <property type="protein sequence ID" value="AT1G53885.1"/>
    <property type="gene ID" value="AT1G53885"/>
</dbReference>
<dbReference type="EnsemblPlants" id="AT1G53903.1">
    <property type="protein sequence ID" value="AT1G53903.1"/>
    <property type="gene ID" value="AT1G53903"/>
</dbReference>
<dbReference type="GeneID" id="841826"/>
<dbReference type="Gramene" id="AT1G53885.1">
    <property type="protein sequence ID" value="AT1G53885.1"/>
    <property type="gene ID" value="AT1G53885"/>
</dbReference>
<dbReference type="Gramene" id="AT1G53903.1">
    <property type="protein sequence ID" value="AT1G53903.1"/>
    <property type="gene ID" value="AT1G53903"/>
</dbReference>
<dbReference type="KEGG" id="ath:AT1G53885"/>
<dbReference type="KEGG" id="ath:AT1G53903"/>
<dbReference type="Araport" id="AT1G53885"/>
<dbReference type="TAIR" id="AT1G53885"/>
<dbReference type="InParanoid" id="P0DO11"/>
<dbReference type="OMA" id="CYLKSCY"/>
<dbReference type="PRO" id="PR:P0DO11"/>
<dbReference type="Proteomes" id="UP000006548">
    <property type="component" value="Chromosome 1"/>
</dbReference>
<dbReference type="ExpressionAtlas" id="P0DO11">
    <property type="expression patterns" value="differential"/>
</dbReference>
<dbReference type="GO" id="GO:0005737">
    <property type="term" value="C:cytoplasm"/>
    <property type="evidence" value="ECO:0000314"/>
    <property type="project" value="UniProtKB"/>
</dbReference>
<dbReference type="GO" id="GO:0005829">
    <property type="term" value="C:cytosol"/>
    <property type="evidence" value="ECO:0000314"/>
    <property type="project" value="UniProtKB"/>
</dbReference>
<dbReference type="GO" id="GO:0005634">
    <property type="term" value="C:nucleus"/>
    <property type="evidence" value="ECO:0000314"/>
    <property type="project" value="UniProtKB"/>
</dbReference>
<dbReference type="GO" id="GO:0008270">
    <property type="term" value="F:zinc ion binding"/>
    <property type="evidence" value="ECO:0007669"/>
    <property type="project" value="UniProtKB-KW"/>
</dbReference>
<dbReference type="GO" id="GO:0009737">
    <property type="term" value="P:response to abscisic acid"/>
    <property type="evidence" value="ECO:0000270"/>
    <property type="project" value="UniProtKB"/>
</dbReference>
<dbReference type="GO" id="GO:0034097">
    <property type="term" value="P:response to cytokine"/>
    <property type="evidence" value="ECO:0000270"/>
    <property type="project" value="UniProtKB"/>
</dbReference>
<dbReference type="GO" id="GO:0009749">
    <property type="term" value="P:response to glucose"/>
    <property type="evidence" value="ECO:0000270"/>
    <property type="project" value="UniProtKB"/>
</dbReference>
<dbReference type="GO" id="GO:1905582">
    <property type="term" value="P:response to mannose"/>
    <property type="evidence" value="ECO:0000270"/>
    <property type="project" value="UniProtKB"/>
</dbReference>
<dbReference type="GO" id="GO:1902074">
    <property type="term" value="P:response to salt"/>
    <property type="evidence" value="ECO:0000270"/>
    <property type="project" value="UniProtKB"/>
</dbReference>
<dbReference type="GO" id="GO:0042594">
    <property type="term" value="P:response to starvation"/>
    <property type="evidence" value="ECO:0000270"/>
    <property type="project" value="UniProtKB"/>
</dbReference>
<dbReference type="GO" id="GO:0009744">
    <property type="term" value="P:response to sucrose"/>
    <property type="evidence" value="ECO:0000270"/>
    <property type="project" value="UniProtKB"/>
</dbReference>
<dbReference type="InterPro" id="IPR044181">
    <property type="entry name" value="FLZ17/18"/>
</dbReference>
<dbReference type="InterPro" id="IPR007650">
    <property type="entry name" value="Zf-FLZ_dom"/>
</dbReference>
<dbReference type="PANTHER" id="PTHR47847">
    <property type="entry name" value="FCS-LIKE ZINC FINGER 17"/>
    <property type="match status" value="1"/>
</dbReference>
<dbReference type="PANTHER" id="PTHR47847:SF2">
    <property type="entry name" value="FCS-LIKE ZINC FINGER 17-RELATED"/>
    <property type="match status" value="1"/>
</dbReference>
<dbReference type="Pfam" id="PF04570">
    <property type="entry name" value="zf-FLZ"/>
    <property type="match status" value="1"/>
</dbReference>
<dbReference type="PROSITE" id="PS51795">
    <property type="entry name" value="ZF_FLZ"/>
    <property type="match status" value="1"/>
</dbReference>
<proteinExistence type="evidence at protein level"/>
<comment type="function">
    <text evidence="2">May act as an adapter to facilitate the interaction of SnRK1 complex with effector proteins, conferring tissue- and stimulus-type specific differences in the SnRK1 regulation pathway.</text>
</comment>
<comment type="subunit">
    <text evidence="4">Interacts with KIN10 and KIN11 via its FLZ-type zinc finger domain (PubMed:29945970). Forms heterodimer with FLZ2 in vitro (PubMed:29945970).</text>
</comment>
<comment type="subcellular location">
    <subcellularLocation>
        <location evidence="2 4">Nucleus</location>
    </subcellularLocation>
    <subcellularLocation>
        <location evidence="2 4">Cytoplasm</location>
    </subcellularLocation>
    <text evidence="2">Shuttles from the cytoplasm to the nucleus when associated with KIN10.</text>
</comment>
<comment type="induction">
    <text evidence="3">Up-regulated in response to prolonged energy depletion (PubMed:26442059). Down-regulated by glucose, sucrose and mannose (PubMed:26442059). Induced by NaCl and abscissic acid (ABA) (PubMed:26442059). Induced by cytokinin (PubMed:26442059).</text>
</comment>
<comment type="similarity">
    <text evidence="7">Belongs to the FLZ family.</text>
</comment>
<reference key="1">
    <citation type="journal article" date="2000" name="Nature">
        <title>Sequence and analysis of chromosome 1 of the plant Arabidopsis thaliana.</title>
        <authorList>
            <person name="Theologis A."/>
            <person name="Ecker J.R."/>
            <person name="Palm C.J."/>
            <person name="Federspiel N.A."/>
            <person name="Kaul S."/>
            <person name="White O."/>
            <person name="Alonso J."/>
            <person name="Altafi H."/>
            <person name="Araujo R."/>
            <person name="Bowman C.L."/>
            <person name="Brooks S.Y."/>
            <person name="Buehler E."/>
            <person name="Chan A."/>
            <person name="Chao Q."/>
            <person name="Chen H."/>
            <person name="Cheuk R.F."/>
            <person name="Chin C.W."/>
            <person name="Chung M.K."/>
            <person name="Conn L."/>
            <person name="Conway A.B."/>
            <person name="Conway A.R."/>
            <person name="Creasy T.H."/>
            <person name="Dewar K."/>
            <person name="Dunn P."/>
            <person name="Etgu P."/>
            <person name="Feldblyum T.V."/>
            <person name="Feng J.-D."/>
            <person name="Fong B."/>
            <person name="Fujii C.Y."/>
            <person name="Gill J.E."/>
            <person name="Goldsmith A.D."/>
            <person name="Haas B."/>
            <person name="Hansen N.F."/>
            <person name="Hughes B."/>
            <person name="Huizar L."/>
            <person name="Hunter J.L."/>
            <person name="Jenkins J."/>
            <person name="Johnson-Hopson C."/>
            <person name="Khan S."/>
            <person name="Khaykin E."/>
            <person name="Kim C.J."/>
            <person name="Koo H.L."/>
            <person name="Kremenetskaia I."/>
            <person name="Kurtz D.B."/>
            <person name="Kwan A."/>
            <person name="Lam B."/>
            <person name="Langin-Hooper S."/>
            <person name="Lee A."/>
            <person name="Lee J.M."/>
            <person name="Lenz C.A."/>
            <person name="Li J.H."/>
            <person name="Li Y.-P."/>
            <person name="Lin X."/>
            <person name="Liu S.X."/>
            <person name="Liu Z.A."/>
            <person name="Luros J.S."/>
            <person name="Maiti R."/>
            <person name="Marziali A."/>
            <person name="Militscher J."/>
            <person name="Miranda M."/>
            <person name="Nguyen M."/>
            <person name="Nierman W.C."/>
            <person name="Osborne B.I."/>
            <person name="Pai G."/>
            <person name="Peterson J."/>
            <person name="Pham P.K."/>
            <person name="Rizzo M."/>
            <person name="Rooney T."/>
            <person name="Rowley D."/>
            <person name="Sakano H."/>
            <person name="Salzberg S.L."/>
            <person name="Schwartz J.R."/>
            <person name="Shinn P."/>
            <person name="Southwick A.M."/>
            <person name="Sun H."/>
            <person name="Tallon L.J."/>
            <person name="Tambunga G."/>
            <person name="Toriumi M.J."/>
            <person name="Town C.D."/>
            <person name="Utterback T."/>
            <person name="Van Aken S."/>
            <person name="Vaysberg M."/>
            <person name="Vysotskaia V.S."/>
            <person name="Walker M."/>
            <person name="Wu D."/>
            <person name="Yu G."/>
            <person name="Fraser C.M."/>
            <person name="Venter J.C."/>
            <person name="Davis R.W."/>
        </authorList>
    </citation>
    <scope>NUCLEOTIDE SEQUENCE [LARGE SCALE GENOMIC DNA]</scope>
    <source>
        <strain>cv. Columbia</strain>
    </source>
</reference>
<reference key="2">
    <citation type="journal article" date="2017" name="Plant J.">
        <title>Araport11: a complete reannotation of the Arabidopsis thaliana reference genome.</title>
        <authorList>
            <person name="Cheng C.Y."/>
            <person name="Krishnakumar V."/>
            <person name="Chan A.P."/>
            <person name="Thibaud-Nissen F."/>
            <person name="Schobel S."/>
            <person name="Town C.D."/>
        </authorList>
    </citation>
    <scope>GENOME REANNOTATION</scope>
    <source>
        <strain>cv. Columbia</strain>
    </source>
</reference>
<reference key="3">
    <citation type="journal article" date="2002" name="Science">
        <title>Functional annotation of a full-length Arabidopsis cDNA collection.</title>
        <authorList>
            <person name="Seki M."/>
            <person name="Narusaka M."/>
            <person name="Kamiya A."/>
            <person name="Ishida J."/>
            <person name="Satou M."/>
            <person name="Sakurai T."/>
            <person name="Nakajima M."/>
            <person name="Enju A."/>
            <person name="Akiyama K."/>
            <person name="Oono Y."/>
            <person name="Muramatsu M."/>
            <person name="Hayashizaki Y."/>
            <person name="Kawai J."/>
            <person name="Carninci P."/>
            <person name="Itoh M."/>
            <person name="Ishii Y."/>
            <person name="Arakawa T."/>
            <person name="Shibata K."/>
            <person name="Shinagawa A."/>
            <person name="Shinozaki K."/>
        </authorList>
    </citation>
    <scope>NUCLEOTIDE SEQUENCE [LARGE SCALE MRNA]</scope>
    <source>
        <strain>cv. Columbia</strain>
    </source>
</reference>
<reference key="4">
    <citation type="journal article" date="2003" name="Science">
        <title>Empirical analysis of transcriptional activity in the Arabidopsis genome.</title>
        <authorList>
            <person name="Yamada K."/>
            <person name="Lim J."/>
            <person name="Dale J.M."/>
            <person name="Chen H."/>
            <person name="Shinn P."/>
            <person name="Palm C.J."/>
            <person name="Southwick A.M."/>
            <person name="Wu H.C."/>
            <person name="Kim C.J."/>
            <person name="Nguyen M."/>
            <person name="Pham P.K."/>
            <person name="Cheuk R.F."/>
            <person name="Karlin-Newmann G."/>
            <person name="Liu S.X."/>
            <person name="Lam B."/>
            <person name="Sakano H."/>
            <person name="Wu T."/>
            <person name="Yu G."/>
            <person name="Miranda M."/>
            <person name="Quach H.L."/>
            <person name="Tripp M."/>
            <person name="Chang C.H."/>
            <person name="Lee J.M."/>
            <person name="Toriumi M.J."/>
            <person name="Chan M.M."/>
            <person name="Tang C.C."/>
            <person name="Onodera C.S."/>
            <person name="Deng J.M."/>
            <person name="Akiyama K."/>
            <person name="Ansari Y."/>
            <person name="Arakawa T."/>
            <person name="Banh J."/>
            <person name="Banno F."/>
            <person name="Bowser L."/>
            <person name="Brooks S.Y."/>
            <person name="Carninci P."/>
            <person name="Chao Q."/>
            <person name="Choy N."/>
            <person name="Enju A."/>
            <person name="Goldsmith A.D."/>
            <person name="Gurjal M."/>
            <person name="Hansen N.F."/>
            <person name="Hayashizaki Y."/>
            <person name="Johnson-Hopson C."/>
            <person name="Hsuan V.W."/>
            <person name="Iida K."/>
            <person name="Karnes M."/>
            <person name="Khan S."/>
            <person name="Koesema E."/>
            <person name="Ishida J."/>
            <person name="Jiang P.X."/>
            <person name="Jones T."/>
            <person name="Kawai J."/>
            <person name="Kamiya A."/>
            <person name="Meyers C."/>
            <person name="Nakajima M."/>
            <person name="Narusaka M."/>
            <person name="Seki M."/>
            <person name="Sakurai T."/>
            <person name="Satou M."/>
            <person name="Tamse R."/>
            <person name="Vaysberg M."/>
            <person name="Wallender E.K."/>
            <person name="Wong C."/>
            <person name="Yamamura Y."/>
            <person name="Yuan S."/>
            <person name="Shinozaki K."/>
            <person name="Davis R.W."/>
            <person name="Theologis A."/>
            <person name="Ecker J.R."/>
        </authorList>
    </citation>
    <scope>NUCLEOTIDE SEQUENCE [LARGE SCALE MRNA]</scope>
    <source>
        <strain>cv. Columbia</strain>
    </source>
</reference>
<reference key="5">
    <citation type="journal article" date="2006" name="Proc. Natl. Acad. Sci. U.S.A.">
        <title>A subset of Arabidopsis AP2 transcription factors mediates cytokinin responses in concert with a two-component pathway.</title>
        <authorList>
            <person name="Rashotte A.M."/>
            <person name="Mason M.G."/>
            <person name="Hutchison C.E."/>
            <person name="Ferreira F.J."/>
            <person name="Schaller G.E."/>
            <person name="Kieber J.J."/>
        </authorList>
    </citation>
    <scope>INDUCTION BY CYTOKININ</scope>
</reference>
<reference key="6">
    <citation type="journal article" date="2014" name="Front. Plant Sci.">
        <title>The complex becomes more complex: protein-protein interactions of SnRK1 with DUF581 family proteins provide a framework for cell- and stimulus type-specific SnRK1 signaling in plants.</title>
        <authorList>
            <person name="Nietzsche M."/>
            <person name="Schiessl I."/>
            <person name="Boernke F."/>
        </authorList>
    </citation>
    <scope>GENE FAMILY</scope>
    <scope>SUBCELLULAR LOCATION</scope>
    <scope>FUNCTION</scope>
</reference>
<reference key="7">
    <citation type="journal article" date="2014" name="Front. Plant Sci.">
        <title>Corrigendum: The complex becomes more complex: protein-protein interactions of SnRK1 with DUF581 family proteins provide a framework for cell- and stimulus type-specific SnRK1 signaling in plants.</title>
        <authorList>
            <person name="Boernke F."/>
        </authorList>
    </citation>
    <scope>ERRATUM OF PUBMED:24600465</scope>
</reference>
<reference key="8">
    <citation type="journal article" date="2014" name="PLoS ONE">
        <title>DUF581 is plant specific FCS-like zinc finger involved in protein-protein interaction.</title>
        <authorList>
            <person name="Jamsheer K M."/>
            <person name="Laxmi A."/>
        </authorList>
    </citation>
    <scope>GENE FAMILY</scope>
    <scope>NOMENCLATURE</scope>
</reference>
<reference key="9">
    <citation type="journal article" date="2015" name="Front. Plant Sci.">
        <title>Expression of Arabidopsis FCS-Like Zinc finger genes is differentially regulated by sugars, cellular energy level, and abiotic stress.</title>
        <authorList>
            <person name="Jamsheer K M."/>
            <person name="Laxmi A."/>
        </authorList>
    </citation>
    <scope>INDUCTION</scope>
</reference>
<reference key="10">
    <citation type="journal article" date="2018" name="J. Biol. Chem.">
        <title>The FCS-like zinc finger scaffold of the kinase SnRK1 is formed by the coordinated actions of the FLZ domain and intrinsically disordered regions.</title>
        <authorList>
            <person name="Jamsheer K M."/>
            <person name="Shukla B.N."/>
            <person name="Jindal S."/>
            <person name="Gopan N."/>
            <person name="Mannully C.T."/>
            <person name="Laxmi A."/>
        </authorList>
    </citation>
    <scope>INTERACTION WITH KIN10 AND KIN11</scope>
    <scope>SUBUNIT</scope>
    <scope>SUBCELLULAR LOCATION</scope>
</reference>
<protein>
    <recommendedName>
        <fullName evidence="6">FCS-Like Zinc finger 17</fullName>
    </recommendedName>
</protein>